<gene>
    <name evidence="1" type="primary">fhs</name>
    <name type="ordered locus">HD_1282</name>
</gene>
<evidence type="ECO:0000255" key="1">
    <source>
        <dbReference type="HAMAP-Rule" id="MF_01543"/>
    </source>
</evidence>
<reference key="1">
    <citation type="submission" date="2003-06" db="EMBL/GenBank/DDBJ databases">
        <title>The complete genome sequence of Haemophilus ducreyi.</title>
        <authorList>
            <person name="Munson R.S. Jr."/>
            <person name="Ray W.C."/>
            <person name="Mahairas G."/>
            <person name="Sabo P."/>
            <person name="Mungur R."/>
            <person name="Johnson L."/>
            <person name="Nguyen D."/>
            <person name="Wang J."/>
            <person name="Forst C."/>
            <person name="Hood L."/>
        </authorList>
    </citation>
    <scope>NUCLEOTIDE SEQUENCE [LARGE SCALE GENOMIC DNA]</scope>
    <source>
        <strain>35000HP / ATCC 700724</strain>
    </source>
</reference>
<sequence length="556" mass="59166">MKSDVEIAQSATMQHINHIAEKLGLTVDQIEQYGKYKAKINPADAFKLPAKNGKLILVTAINPTPAGEGKTTVTIGLTDALNHIGKQAVVAAREPSLGPVFGVKGGAAGGGYAQVLPMEDINLHFTGDFHAITSANNLLAALLDNHIYQGNALNIDPKRILWRRVIDMNDRQLRNILGGLGNTTDGVIRPDGFDITVASEVMAIFCLAKDLADLKTRLGNILVAYTKDKQPVYAKDLNAQGAMAALLKDAIKPNLVQTMAGSPAFIHGGPFANIAHGCNSVIATRLALHLGDYAVTEAGFGADLGAEKFCDIKCRLAELKPDVAVIVATVRALKYNGGVEKANLAEENLEALTEGLPNLLKHIANLKNVLGLPVVVALNRFVSDSDAELALIQTACAKQGVEVSLTEVWARSAVGGVDLAHKVLKAIDEQQNNFQFAYDVNDRIQHKITAIAQKIYGATDVNFSAEALAEIKNLEKLALDKLPICMAKTQYSLSDSAKLLGCPTGFNITVRSITVSAGAGFIVAICGSIMRMPGLPKNPATNRIDVDENGVISGLF</sequence>
<name>FTHS_HAEDU</name>
<keyword id="KW-0067">ATP-binding</keyword>
<keyword id="KW-0436">Ligase</keyword>
<keyword id="KW-0547">Nucleotide-binding</keyword>
<keyword id="KW-0554">One-carbon metabolism</keyword>
<keyword id="KW-1185">Reference proteome</keyword>
<dbReference type="EC" id="6.3.4.3" evidence="1"/>
<dbReference type="EMBL" id="AE017143">
    <property type="protein sequence ID" value="AAP96104.1"/>
    <property type="molecule type" value="Genomic_DNA"/>
</dbReference>
<dbReference type="RefSeq" id="WP_010945153.1">
    <property type="nucleotide sequence ID" value="NC_002940.2"/>
</dbReference>
<dbReference type="SMR" id="Q7VLW6"/>
<dbReference type="STRING" id="233412.HD_1282"/>
<dbReference type="KEGG" id="hdu:HD_1282"/>
<dbReference type="eggNOG" id="COG2759">
    <property type="taxonomic scope" value="Bacteria"/>
</dbReference>
<dbReference type="HOGENOM" id="CLU_003601_3_3_6"/>
<dbReference type="OrthoDB" id="9761733at2"/>
<dbReference type="UniPathway" id="UPA00193"/>
<dbReference type="Proteomes" id="UP000001022">
    <property type="component" value="Chromosome"/>
</dbReference>
<dbReference type="GO" id="GO:0005524">
    <property type="term" value="F:ATP binding"/>
    <property type="evidence" value="ECO:0007669"/>
    <property type="project" value="UniProtKB-UniRule"/>
</dbReference>
<dbReference type="GO" id="GO:0004329">
    <property type="term" value="F:formate-tetrahydrofolate ligase activity"/>
    <property type="evidence" value="ECO:0007669"/>
    <property type="project" value="UniProtKB-UniRule"/>
</dbReference>
<dbReference type="GO" id="GO:0035999">
    <property type="term" value="P:tetrahydrofolate interconversion"/>
    <property type="evidence" value="ECO:0007669"/>
    <property type="project" value="UniProtKB-UniRule"/>
</dbReference>
<dbReference type="CDD" id="cd00477">
    <property type="entry name" value="FTHFS"/>
    <property type="match status" value="1"/>
</dbReference>
<dbReference type="FunFam" id="3.30.1510.10:FF:000001">
    <property type="entry name" value="Formate--tetrahydrofolate ligase"/>
    <property type="match status" value="1"/>
</dbReference>
<dbReference type="FunFam" id="3.10.410.10:FF:000001">
    <property type="entry name" value="Putative formate--tetrahydrofolate ligase"/>
    <property type="match status" value="1"/>
</dbReference>
<dbReference type="Gene3D" id="3.30.1510.10">
    <property type="entry name" value="Domain 2, N(10)-formyltetrahydrofolate synthetase"/>
    <property type="match status" value="1"/>
</dbReference>
<dbReference type="Gene3D" id="3.10.410.10">
    <property type="entry name" value="Formyltetrahydrofolate synthetase, domain 3"/>
    <property type="match status" value="1"/>
</dbReference>
<dbReference type="Gene3D" id="3.40.50.300">
    <property type="entry name" value="P-loop containing nucleotide triphosphate hydrolases"/>
    <property type="match status" value="1"/>
</dbReference>
<dbReference type="HAMAP" id="MF_01543">
    <property type="entry name" value="FTHFS"/>
    <property type="match status" value="1"/>
</dbReference>
<dbReference type="InterPro" id="IPR000559">
    <property type="entry name" value="Formate_THF_ligase"/>
</dbReference>
<dbReference type="InterPro" id="IPR020628">
    <property type="entry name" value="Formate_THF_ligase_CS"/>
</dbReference>
<dbReference type="InterPro" id="IPR027417">
    <property type="entry name" value="P-loop_NTPase"/>
</dbReference>
<dbReference type="NCBIfam" id="NF010030">
    <property type="entry name" value="PRK13505.1"/>
    <property type="match status" value="1"/>
</dbReference>
<dbReference type="Pfam" id="PF01268">
    <property type="entry name" value="FTHFS"/>
    <property type="match status" value="1"/>
</dbReference>
<dbReference type="SUPFAM" id="SSF52540">
    <property type="entry name" value="P-loop containing nucleoside triphosphate hydrolases"/>
    <property type="match status" value="1"/>
</dbReference>
<dbReference type="PROSITE" id="PS00721">
    <property type="entry name" value="FTHFS_1"/>
    <property type="match status" value="1"/>
</dbReference>
<dbReference type="PROSITE" id="PS00722">
    <property type="entry name" value="FTHFS_2"/>
    <property type="match status" value="1"/>
</dbReference>
<proteinExistence type="inferred from homology"/>
<accession>Q7VLW6</accession>
<organism>
    <name type="scientific">Haemophilus ducreyi (strain 35000HP / ATCC 700724)</name>
    <dbReference type="NCBI Taxonomy" id="233412"/>
    <lineage>
        <taxon>Bacteria</taxon>
        <taxon>Pseudomonadati</taxon>
        <taxon>Pseudomonadota</taxon>
        <taxon>Gammaproteobacteria</taxon>
        <taxon>Pasteurellales</taxon>
        <taxon>Pasteurellaceae</taxon>
        <taxon>Haemophilus</taxon>
    </lineage>
</organism>
<feature type="chain" id="PRO_0000199350" description="Formate--tetrahydrofolate ligase">
    <location>
        <begin position="1"/>
        <end position="556"/>
    </location>
</feature>
<feature type="binding site" evidence="1">
    <location>
        <begin position="64"/>
        <end position="71"/>
    </location>
    <ligand>
        <name>ATP</name>
        <dbReference type="ChEBI" id="CHEBI:30616"/>
    </ligand>
</feature>
<protein>
    <recommendedName>
        <fullName evidence="1">Formate--tetrahydrofolate ligase</fullName>
        <ecNumber evidence="1">6.3.4.3</ecNumber>
    </recommendedName>
    <alternativeName>
        <fullName evidence="1">Formyltetrahydrofolate synthetase</fullName>
        <shortName evidence="1">FHS</shortName>
        <shortName evidence="1">FTHFS</shortName>
    </alternativeName>
</protein>
<comment type="catalytic activity">
    <reaction evidence="1">
        <text>(6S)-5,6,7,8-tetrahydrofolate + formate + ATP = (6R)-10-formyltetrahydrofolate + ADP + phosphate</text>
        <dbReference type="Rhea" id="RHEA:20221"/>
        <dbReference type="ChEBI" id="CHEBI:15740"/>
        <dbReference type="ChEBI" id="CHEBI:30616"/>
        <dbReference type="ChEBI" id="CHEBI:43474"/>
        <dbReference type="ChEBI" id="CHEBI:57453"/>
        <dbReference type="ChEBI" id="CHEBI:195366"/>
        <dbReference type="ChEBI" id="CHEBI:456216"/>
        <dbReference type="EC" id="6.3.4.3"/>
    </reaction>
</comment>
<comment type="pathway">
    <text evidence="1">One-carbon metabolism; tetrahydrofolate interconversion.</text>
</comment>
<comment type="similarity">
    <text evidence="1">Belongs to the formate--tetrahydrofolate ligase family.</text>
</comment>